<accession>B2SQ45</accession>
<organism>
    <name type="scientific">Xanthomonas oryzae pv. oryzae (strain PXO99A)</name>
    <dbReference type="NCBI Taxonomy" id="360094"/>
    <lineage>
        <taxon>Bacteria</taxon>
        <taxon>Pseudomonadati</taxon>
        <taxon>Pseudomonadota</taxon>
        <taxon>Gammaproteobacteria</taxon>
        <taxon>Lysobacterales</taxon>
        <taxon>Lysobacteraceae</taxon>
        <taxon>Xanthomonas</taxon>
    </lineage>
</organism>
<reference key="1">
    <citation type="journal article" date="2008" name="BMC Genomics">
        <title>Genome sequence and rapid evolution of the rice pathogen Xanthomonas oryzae pv. oryzae PXO99A.</title>
        <authorList>
            <person name="Salzberg S.L."/>
            <person name="Sommer D.D."/>
            <person name="Schatz M.C."/>
            <person name="Phillippy A.M."/>
            <person name="Rabinowicz P.D."/>
            <person name="Tsuge S."/>
            <person name="Furutani A."/>
            <person name="Ochiai H."/>
            <person name="Delcher A.L."/>
            <person name="Kelley D."/>
            <person name="Madupu R."/>
            <person name="Puiu D."/>
            <person name="Radune D."/>
            <person name="Shumway M."/>
            <person name="Trapnell C."/>
            <person name="Aparna G."/>
            <person name="Jha G."/>
            <person name="Pandey A."/>
            <person name="Patil P.B."/>
            <person name="Ishihara H."/>
            <person name="Meyer D.F."/>
            <person name="Szurek B."/>
            <person name="Verdier V."/>
            <person name="Koebnik R."/>
            <person name="Dow J.M."/>
            <person name="Ryan R.P."/>
            <person name="Hirata H."/>
            <person name="Tsuyumu S."/>
            <person name="Won Lee S."/>
            <person name="Seo Y.-S."/>
            <person name="Sriariyanum M."/>
            <person name="Ronald P.C."/>
            <person name="Sonti R.V."/>
            <person name="Van Sluys M.-A."/>
            <person name="Leach J.E."/>
            <person name="White F.F."/>
            <person name="Bogdanove A.J."/>
        </authorList>
    </citation>
    <scope>NUCLEOTIDE SEQUENCE [LARGE SCALE GENOMIC DNA]</scope>
    <source>
        <strain>PXO99A</strain>
    </source>
</reference>
<dbReference type="EMBL" id="CP000967">
    <property type="protein sequence ID" value="ACD59465.1"/>
    <property type="molecule type" value="Genomic_DNA"/>
</dbReference>
<dbReference type="RefSeq" id="WP_011258777.1">
    <property type="nucleotide sequence ID" value="NC_010717.2"/>
</dbReference>
<dbReference type="SMR" id="B2SQ45"/>
<dbReference type="KEGG" id="xop:PXO_01225"/>
<dbReference type="eggNOG" id="COG2900">
    <property type="taxonomic scope" value="Bacteria"/>
</dbReference>
<dbReference type="HOGENOM" id="CLU_180796_4_2_6"/>
<dbReference type="Proteomes" id="UP000001740">
    <property type="component" value="Chromosome"/>
</dbReference>
<dbReference type="Gene3D" id="1.20.5.300">
    <property type="match status" value="1"/>
</dbReference>
<dbReference type="HAMAP" id="MF_00715">
    <property type="entry name" value="SlyX"/>
    <property type="match status" value="1"/>
</dbReference>
<dbReference type="InterPro" id="IPR007236">
    <property type="entry name" value="SlyX"/>
</dbReference>
<dbReference type="NCBIfam" id="NF002024">
    <property type="entry name" value="PRK00846.1"/>
    <property type="match status" value="1"/>
</dbReference>
<dbReference type="PANTHER" id="PTHR36508">
    <property type="entry name" value="PROTEIN SLYX"/>
    <property type="match status" value="1"/>
</dbReference>
<dbReference type="PANTHER" id="PTHR36508:SF1">
    <property type="entry name" value="PROTEIN SLYX"/>
    <property type="match status" value="1"/>
</dbReference>
<dbReference type="Pfam" id="PF04102">
    <property type="entry name" value="SlyX"/>
    <property type="match status" value="1"/>
</dbReference>
<feature type="chain" id="PRO_1000195861" description="Protein SlyX homolog">
    <location>
        <begin position="1"/>
        <end position="78"/>
    </location>
</feature>
<comment type="similarity">
    <text evidence="1">Belongs to the SlyX family.</text>
</comment>
<name>SLYX_XANOP</name>
<proteinExistence type="inferred from homology"/>
<sequence length="78" mass="8762">MHEQLSPRDQALEARLVELETRLSFQEQALNELSEALADARLTGARNAELIRHLLDDLGKVRSTLFADAADEPPPPHY</sequence>
<protein>
    <recommendedName>
        <fullName evidence="1">Protein SlyX homolog</fullName>
    </recommendedName>
</protein>
<evidence type="ECO:0000255" key="1">
    <source>
        <dbReference type="HAMAP-Rule" id="MF_00715"/>
    </source>
</evidence>
<gene>
    <name evidence="1" type="primary">slyX</name>
    <name type="ordered locus">PXO_01225</name>
</gene>